<comment type="similarity">
    <text evidence="1">To B.subtilis pcf and to sigma factors.</text>
</comment>
<organism>
    <name type="scientific">Bacillus subtilis (strain 168)</name>
    <dbReference type="NCBI Taxonomy" id="224308"/>
    <lineage>
        <taxon>Bacteria</taxon>
        <taxon>Bacillati</taxon>
        <taxon>Bacillota</taxon>
        <taxon>Bacilli</taxon>
        <taxon>Bacillales</taxon>
        <taxon>Bacillaceae</taxon>
        <taxon>Bacillus</taxon>
    </lineage>
</organism>
<keyword id="KW-1185">Reference proteome</keyword>
<dbReference type="EMBL" id="D32216">
    <property type="protein sequence ID" value="BAA06930.1"/>
    <property type="molecule type" value="Genomic_DNA"/>
</dbReference>
<dbReference type="EMBL" id="D84432">
    <property type="protein sequence ID" value="BAA12392.1"/>
    <property type="molecule type" value="Genomic_DNA"/>
</dbReference>
<dbReference type="EMBL" id="AL009126">
    <property type="protein sequence ID" value="CAB14563.1"/>
    <property type="molecule type" value="Genomic_DNA"/>
</dbReference>
<dbReference type="PIR" id="H69945">
    <property type="entry name" value="H69945"/>
</dbReference>
<dbReference type="RefSeq" id="NP_390499.1">
    <property type="nucleotide sequence ID" value="NC_000964.3"/>
</dbReference>
<dbReference type="RefSeq" id="WP_004398775.1">
    <property type="nucleotide sequence ID" value="NZ_OZ025638.1"/>
</dbReference>
<dbReference type="SMR" id="P45948"/>
<dbReference type="FunCoup" id="P45948">
    <property type="interactions" value="139"/>
</dbReference>
<dbReference type="STRING" id="224308.BSU26220"/>
<dbReference type="PaxDb" id="224308-BSU26220"/>
<dbReference type="EnsemblBacteria" id="CAB14563">
    <property type="protein sequence ID" value="CAB14563"/>
    <property type="gene ID" value="BSU_26220"/>
</dbReference>
<dbReference type="GeneID" id="937693"/>
<dbReference type="KEGG" id="bsu:BSU26220"/>
<dbReference type="PATRIC" id="fig|224308.179.peg.2848"/>
<dbReference type="eggNOG" id="COG3677">
    <property type="taxonomic scope" value="Bacteria"/>
</dbReference>
<dbReference type="InParanoid" id="P45948"/>
<dbReference type="OrthoDB" id="8910390at2"/>
<dbReference type="BioCyc" id="BSUB:BSU26220-MONOMER"/>
<dbReference type="Proteomes" id="UP000001570">
    <property type="component" value="Chromosome"/>
</dbReference>
<dbReference type="InterPro" id="IPR013324">
    <property type="entry name" value="RNA_pol_sigma_r3/r4-like"/>
</dbReference>
<dbReference type="SUPFAM" id="SSF88659">
    <property type="entry name" value="Sigma3 and sigma4 domains of RNA polymerase sigma factors"/>
    <property type="match status" value="1"/>
</dbReference>
<accession>P45948</accession>
<name>YQAQ_BACSU</name>
<feature type="chain" id="PRO_0000049748" description="Uncharacterized protein YqaQ">
    <location>
        <begin position="1"/>
        <end position="151"/>
    </location>
</feature>
<reference key="1">
    <citation type="journal article" date="1995" name="Microbiology">
        <title>Complete nucleotide sequence of a skin element excised by DNA rearrangement during sporulation in Bacillus subtilis.</title>
        <authorList>
            <person name="Takemaru K."/>
            <person name="Mizuno M."/>
            <person name="Sato T."/>
            <person name="Takeuchi M."/>
            <person name="Kobayashi Y."/>
        </authorList>
    </citation>
    <scope>NUCLEOTIDE SEQUENCE [GENOMIC DNA]</scope>
    <source>
        <strain>168 / JH642</strain>
    </source>
</reference>
<reference key="2">
    <citation type="journal article" date="1996" name="Microbiology">
        <title>Systematic sequencing of the 283 kb 210 degrees-232 degrees region of the Bacillus subtilis genome containing the skin element and many sporulation genes.</title>
        <authorList>
            <person name="Mizuno M."/>
            <person name="Masuda S."/>
            <person name="Takemaru K."/>
            <person name="Hosono S."/>
            <person name="Sato T."/>
            <person name="Takeuchi M."/>
            <person name="Kobayashi Y."/>
        </authorList>
    </citation>
    <scope>NUCLEOTIDE SEQUENCE [GENOMIC DNA]</scope>
    <source>
        <strain>168 / JH642</strain>
    </source>
</reference>
<reference key="3">
    <citation type="journal article" date="1997" name="Nature">
        <title>The complete genome sequence of the Gram-positive bacterium Bacillus subtilis.</title>
        <authorList>
            <person name="Kunst F."/>
            <person name="Ogasawara N."/>
            <person name="Moszer I."/>
            <person name="Albertini A.M."/>
            <person name="Alloni G."/>
            <person name="Azevedo V."/>
            <person name="Bertero M.G."/>
            <person name="Bessieres P."/>
            <person name="Bolotin A."/>
            <person name="Borchert S."/>
            <person name="Borriss R."/>
            <person name="Boursier L."/>
            <person name="Brans A."/>
            <person name="Braun M."/>
            <person name="Brignell S.C."/>
            <person name="Bron S."/>
            <person name="Brouillet S."/>
            <person name="Bruschi C.V."/>
            <person name="Caldwell B."/>
            <person name="Capuano V."/>
            <person name="Carter N.M."/>
            <person name="Choi S.-K."/>
            <person name="Codani J.-J."/>
            <person name="Connerton I.F."/>
            <person name="Cummings N.J."/>
            <person name="Daniel R.A."/>
            <person name="Denizot F."/>
            <person name="Devine K.M."/>
            <person name="Duesterhoeft A."/>
            <person name="Ehrlich S.D."/>
            <person name="Emmerson P.T."/>
            <person name="Entian K.-D."/>
            <person name="Errington J."/>
            <person name="Fabret C."/>
            <person name="Ferrari E."/>
            <person name="Foulger D."/>
            <person name="Fritz C."/>
            <person name="Fujita M."/>
            <person name="Fujita Y."/>
            <person name="Fuma S."/>
            <person name="Galizzi A."/>
            <person name="Galleron N."/>
            <person name="Ghim S.-Y."/>
            <person name="Glaser P."/>
            <person name="Goffeau A."/>
            <person name="Golightly E.J."/>
            <person name="Grandi G."/>
            <person name="Guiseppi G."/>
            <person name="Guy B.J."/>
            <person name="Haga K."/>
            <person name="Haiech J."/>
            <person name="Harwood C.R."/>
            <person name="Henaut A."/>
            <person name="Hilbert H."/>
            <person name="Holsappel S."/>
            <person name="Hosono S."/>
            <person name="Hullo M.-F."/>
            <person name="Itaya M."/>
            <person name="Jones L.-M."/>
            <person name="Joris B."/>
            <person name="Karamata D."/>
            <person name="Kasahara Y."/>
            <person name="Klaerr-Blanchard M."/>
            <person name="Klein C."/>
            <person name="Kobayashi Y."/>
            <person name="Koetter P."/>
            <person name="Koningstein G."/>
            <person name="Krogh S."/>
            <person name="Kumano M."/>
            <person name="Kurita K."/>
            <person name="Lapidus A."/>
            <person name="Lardinois S."/>
            <person name="Lauber J."/>
            <person name="Lazarevic V."/>
            <person name="Lee S.-M."/>
            <person name="Levine A."/>
            <person name="Liu H."/>
            <person name="Masuda S."/>
            <person name="Mauel C."/>
            <person name="Medigue C."/>
            <person name="Medina N."/>
            <person name="Mellado R.P."/>
            <person name="Mizuno M."/>
            <person name="Moestl D."/>
            <person name="Nakai S."/>
            <person name="Noback M."/>
            <person name="Noone D."/>
            <person name="O'Reilly M."/>
            <person name="Ogawa K."/>
            <person name="Ogiwara A."/>
            <person name="Oudega B."/>
            <person name="Park S.-H."/>
            <person name="Parro V."/>
            <person name="Pohl T.M."/>
            <person name="Portetelle D."/>
            <person name="Porwollik S."/>
            <person name="Prescott A.M."/>
            <person name="Presecan E."/>
            <person name="Pujic P."/>
            <person name="Purnelle B."/>
            <person name="Rapoport G."/>
            <person name="Rey M."/>
            <person name="Reynolds S."/>
            <person name="Rieger M."/>
            <person name="Rivolta C."/>
            <person name="Rocha E."/>
            <person name="Roche B."/>
            <person name="Rose M."/>
            <person name="Sadaie Y."/>
            <person name="Sato T."/>
            <person name="Scanlan E."/>
            <person name="Schleich S."/>
            <person name="Schroeter R."/>
            <person name="Scoffone F."/>
            <person name="Sekiguchi J."/>
            <person name="Sekowska A."/>
            <person name="Seror S.J."/>
            <person name="Serror P."/>
            <person name="Shin B.-S."/>
            <person name="Soldo B."/>
            <person name="Sorokin A."/>
            <person name="Tacconi E."/>
            <person name="Takagi T."/>
            <person name="Takahashi H."/>
            <person name="Takemaru K."/>
            <person name="Takeuchi M."/>
            <person name="Tamakoshi A."/>
            <person name="Tanaka T."/>
            <person name="Terpstra P."/>
            <person name="Tognoni A."/>
            <person name="Tosato V."/>
            <person name="Uchiyama S."/>
            <person name="Vandenbol M."/>
            <person name="Vannier F."/>
            <person name="Vassarotti A."/>
            <person name="Viari A."/>
            <person name="Wambutt R."/>
            <person name="Wedler E."/>
            <person name="Wedler H."/>
            <person name="Weitzenegger T."/>
            <person name="Winters P."/>
            <person name="Wipat A."/>
            <person name="Yamamoto H."/>
            <person name="Yamane K."/>
            <person name="Yasumoto K."/>
            <person name="Yata K."/>
            <person name="Yoshida K."/>
            <person name="Yoshikawa H.-F."/>
            <person name="Zumstein E."/>
            <person name="Yoshikawa H."/>
            <person name="Danchin A."/>
        </authorList>
    </citation>
    <scope>NUCLEOTIDE SEQUENCE [LARGE SCALE GENOMIC DNA]</scope>
    <source>
        <strain>168</strain>
    </source>
</reference>
<reference key="4">
    <citation type="journal article" date="1995" name="Gene">
        <title>Analysis of a Bacillus subtilis genome fragment using a co-operative computer system prototype.</title>
        <authorList>
            <person name="Medigue C."/>
            <person name="Moszer I."/>
            <person name="Viari A."/>
            <person name="Danchin A."/>
        </authorList>
    </citation>
    <scope>IDENTIFICATION</scope>
</reference>
<evidence type="ECO:0000305" key="1"/>
<protein>
    <recommendedName>
        <fullName>Uncharacterized protein YqaQ</fullName>
    </recommendedName>
</protein>
<proteinExistence type="predicted"/>
<sequence>MNRKEIENLINSYHWMVKEVRRLQRVLYGSVIPMKNWGVAQYGLEATMPKGSPGKSQAELRQMDMREERLFKRLKYYEERVYAVELGAEKIHGEQHKVIYDCMMEGMSYRAISLHLGISRETVRKMKDEFISQLCQDCHFERLLNLKKSVV</sequence>
<gene>
    <name type="primary">yqaQ</name>
    <name type="ordered locus">BSU26220</name>
</gene>